<dbReference type="EC" id="2.2.1.7" evidence="1"/>
<dbReference type="EMBL" id="CP000821">
    <property type="protein sequence ID" value="ABV37933.1"/>
    <property type="molecule type" value="Genomic_DNA"/>
</dbReference>
<dbReference type="RefSeq" id="WP_012143663.1">
    <property type="nucleotide sequence ID" value="NC_009831.1"/>
</dbReference>
<dbReference type="SMR" id="A8FYL0"/>
<dbReference type="STRING" id="425104.Ssed_3329"/>
<dbReference type="KEGG" id="sse:Ssed_3329"/>
<dbReference type="eggNOG" id="COG1154">
    <property type="taxonomic scope" value="Bacteria"/>
</dbReference>
<dbReference type="HOGENOM" id="CLU_009227_1_4_6"/>
<dbReference type="OrthoDB" id="9803371at2"/>
<dbReference type="UniPathway" id="UPA00064">
    <property type="reaction ID" value="UER00091"/>
</dbReference>
<dbReference type="Proteomes" id="UP000002015">
    <property type="component" value="Chromosome"/>
</dbReference>
<dbReference type="GO" id="GO:0005829">
    <property type="term" value="C:cytosol"/>
    <property type="evidence" value="ECO:0007669"/>
    <property type="project" value="TreeGrafter"/>
</dbReference>
<dbReference type="GO" id="GO:0008661">
    <property type="term" value="F:1-deoxy-D-xylulose-5-phosphate synthase activity"/>
    <property type="evidence" value="ECO:0007669"/>
    <property type="project" value="UniProtKB-UniRule"/>
</dbReference>
<dbReference type="GO" id="GO:0000287">
    <property type="term" value="F:magnesium ion binding"/>
    <property type="evidence" value="ECO:0007669"/>
    <property type="project" value="UniProtKB-UniRule"/>
</dbReference>
<dbReference type="GO" id="GO:0030976">
    <property type="term" value="F:thiamine pyrophosphate binding"/>
    <property type="evidence" value="ECO:0007669"/>
    <property type="project" value="UniProtKB-UniRule"/>
</dbReference>
<dbReference type="GO" id="GO:0052865">
    <property type="term" value="P:1-deoxy-D-xylulose 5-phosphate biosynthetic process"/>
    <property type="evidence" value="ECO:0007669"/>
    <property type="project" value="UniProtKB-UniPathway"/>
</dbReference>
<dbReference type="GO" id="GO:0019288">
    <property type="term" value="P:isopentenyl diphosphate biosynthetic process, methylerythritol 4-phosphate pathway"/>
    <property type="evidence" value="ECO:0007669"/>
    <property type="project" value="TreeGrafter"/>
</dbReference>
<dbReference type="GO" id="GO:0016114">
    <property type="term" value="P:terpenoid biosynthetic process"/>
    <property type="evidence" value="ECO:0007669"/>
    <property type="project" value="UniProtKB-UniRule"/>
</dbReference>
<dbReference type="GO" id="GO:0009228">
    <property type="term" value="P:thiamine biosynthetic process"/>
    <property type="evidence" value="ECO:0007669"/>
    <property type="project" value="UniProtKB-UniRule"/>
</dbReference>
<dbReference type="CDD" id="cd02007">
    <property type="entry name" value="TPP_DXS"/>
    <property type="match status" value="1"/>
</dbReference>
<dbReference type="CDD" id="cd07033">
    <property type="entry name" value="TPP_PYR_DXS_TK_like"/>
    <property type="match status" value="1"/>
</dbReference>
<dbReference type="FunFam" id="3.40.50.920:FF:000002">
    <property type="entry name" value="1-deoxy-D-xylulose-5-phosphate synthase"/>
    <property type="match status" value="1"/>
</dbReference>
<dbReference type="FunFam" id="3.40.50.970:FF:000005">
    <property type="entry name" value="1-deoxy-D-xylulose-5-phosphate synthase"/>
    <property type="match status" value="1"/>
</dbReference>
<dbReference type="Gene3D" id="3.40.50.920">
    <property type="match status" value="1"/>
</dbReference>
<dbReference type="Gene3D" id="3.40.50.970">
    <property type="match status" value="2"/>
</dbReference>
<dbReference type="HAMAP" id="MF_00315">
    <property type="entry name" value="DXP_synth"/>
    <property type="match status" value="1"/>
</dbReference>
<dbReference type="InterPro" id="IPR005477">
    <property type="entry name" value="Dxylulose-5-P_synthase"/>
</dbReference>
<dbReference type="InterPro" id="IPR029061">
    <property type="entry name" value="THDP-binding"/>
</dbReference>
<dbReference type="InterPro" id="IPR009014">
    <property type="entry name" value="Transketo_C/PFOR_II"/>
</dbReference>
<dbReference type="InterPro" id="IPR005475">
    <property type="entry name" value="Transketolase-like_Pyr-bd"/>
</dbReference>
<dbReference type="InterPro" id="IPR020826">
    <property type="entry name" value="Transketolase_BS"/>
</dbReference>
<dbReference type="InterPro" id="IPR033248">
    <property type="entry name" value="Transketolase_C"/>
</dbReference>
<dbReference type="InterPro" id="IPR049557">
    <property type="entry name" value="Transketolase_CS"/>
</dbReference>
<dbReference type="NCBIfam" id="TIGR00204">
    <property type="entry name" value="dxs"/>
    <property type="match status" value="1"/>
</dbReference>
<dbReference type="NCBIfam" id="NF003933">
    <property type="entry name" value="PRK05444.2-2"/>
    <property type="match status" value="1"/>
</dbReference>
<dbReference type="PANTHER" id="PTHR43322">
    <property type="entry name" value="1-D-DEOXYXYLULOSE 5-PHOSPHATE SYNTHASE-RELATED"/>
    <property type="match status" value="1"/>
</dbReference>
<dbReference type="PANTHER" id="PTHR43322:SF5">
    <property type="entry name" value="1-DEOXY-D-XYLULOSE-5-PHOSPHATE SYNTHASE, CHLOROPLASTIC"/>
    <property type="match status" value="1"/>
</dbReference>
<dbReference type="Pfam" id="PF13292">
    <property type="entry name" value="DXP_synthase_N"/>
    <property type="match status" value="1"/>
</dbReference>
<dbReference type="Pfam" id="PF02779">
    <property type="entry name" value="Transket_pyr"/>
    <property type="match status" value="1"/>
</dbReference>
<dbReference type="Pfam" id="PF02780">
    <property type="entry name" value="Transketolase_C"/>
    <property type="match status" value="1"/>
</dbReference>
<dbReference type="SMART" id="SM00861">
    <property type="entry name" value="Transket_pyr"/>
    <property type="match status" value="1"/>
</dbReference>
<dbReference type="SUPFAM" id="SSF52518">
    <property type="entry name" value="Thiamin diphosphate-binding fold (THDP-binding)"/>
    <property type="match status" value="2"/>
</dbReference>
<dbReference type="SUPFAM" id="SSF52922">
    <property type="entry name" value="TK C-terminal domain-like"/>
    <property type="match status" value="1"/>
</dbReference>
<dbReference type="PROSITE" id="PS00801">
    <property type="entry name" value="TRANSKETOLASE_1"/>
    <property type="match status" value="1"/>
</dbReference>
<dbReference type="PROSITE" id="PS00802">
    <property type="entry name" value="TRANSKETOLASE_2"/>
    <property type="match status" value="1"/>
</dbReference>
<evidence type="ECO:0000255" key="1">
    <source>
        <dbReference type="HAMAP-Rule" id="MF_00315"/>
    </source>
</evidence>
<keyword id="KW-0414">Isoprene biosynthesis</keyword>
<keyword id="KW-0460">Magnesium</keyword>
<keyword id="KW-0479">Metal-binding</keyword>
<keyword id="KW-1185">Reference proteome</keyword>
<keyword id="KW-0784">Thiamine biosynthesis</keyword>
<keyword id="KW-0786">Thiamine pyrophosphate</keyword>
<keyword id="KW-0808">Transferase</keyword>
<reference key="1">
    <citation type="submission" date="2007-08" db="EMBL/GenBank/DDBJ databases">
        <title>Complete sequence of Shewanella sediminis HAW-EB3.</title>
        <authorList>
            <consortium name="US DOE Joint Genome Institute"/>
            <person name="Copeland A."/>
            <person name="Lucas S."/>
            <person name="Lapidus A."/>
            <person name="Barry K."/>
            <person name="Glavina del Rio T."/>
            <person name="Dalin E."/>
            <person name="Tice H."/>
            <person name="Pitluck S."/>
            <person name="Chertkov O."/>
            <person name="Brettin T."/>
            <person name="Bruce D."/>
            <person name="Detter J.C."/>
            <person name="Han C."/>
            <person name="Schmutz J."/>
            <person name="Larimer F."/>
            <person name="Land M."/>
            <person name="Hauser L."/>
            <person name="Kyrpides N."/>
            <person name="Kim E."/>
            <person name="Zhao J.-S."/>
            <person name="Richardson P."/>
        </authorList>
    </citation>
    <scope>NUCLEOTIDE SEQUENCE [LARGE SCALE GENOMIC DNA]</scope>
    <source>
        <strain>HAW-EB3</strain>
    </source>
</reference>
<accession>A8FYL0</accession>
<sequence>MSLDISNYPVLAQANTPDELRQLPQAVLPQLADELRGFLLKSVGKSSGHFASGLGTVELTVALHYVYNTPFDRLIWDVGHQAYPHKILTGRRDKMHTIRQKGGIHPFPWREESEYDTFSVGHSGTSISAALAMAVAAEKEQAGRKVVSVIGDGAMTGGMVFEAMNHAGDLHNDMLVVLNDNEMSISENVGALNNHLAQLMSGRFYTTIRESSKKVLEGMPVIKEMAKRTEEHLKGMVVPGTMFEELGFNYIGPIDGHDVDALVETMRNMRNLSGPQILHIMTKKGRGYEPAEKDPIGWHAVPKFDPSTFEKPASKPSNPTFSQVFGKWLCDVAEKDDKVLGITPAMREGSGMVEFSQRFPKQYFDAAIAEQHAVTLGAGFACEGLKPVVAIYSTFLQRGYDQLIHDVALQKLPVLFAIDRGGIVGADGPTHQGAFDLSFMRTVPNMVIMAPSDENECRQMLYTGYCYREGPTAVRYPRGSATGEPQVEEMQALPIGKGLIKRQGQKVAILNFGTLLADVLTAAESIDATVADMRFVKPLDVELVKELASSHDLLVTVEENAIMGGAGSGVLELLQQLKQPMPVLQIGLPDEFIKHGASGEILAELRLDAAGILEQIEEYLK</sequence>
<feature type="chain" id="PRO_1000079105" description="1-deoxy-D-xylulose-5-phosphate synthase">
    <location>
        <begin position="1"/>
        <end position="621"/>
    </location>
</feature>
<feature type="binding site" evidence="1">
    <location>
        <position position="80"/>
    </location>
    <ligand>
        <name>thiamine diphosphate</name>
        <dbReference type="ChEBI" id="CHEBI:58937"/>
    </ligand>
</feature>
<feature type="binding site" evidence="1">
    <location>
        <begin position="121"/>
        <end position="123"/>
    </location>
    <ligand>
        <name>thiamine diphosphate</name>
        <dbReference type="ChEBI" id="CHEBI:58937"/>
    </ligand>
</feature>
<feature type="binding site" evidence="1">
    <location>
        <position position="152"/>
    </location>
    <ligand>
        <name>Mg(2+)</name>
        <dbReference type="ChEBI" id="CHEBI:18420"/>
    </ligand>
</feature>
<feature type="binding site" evidence="1">
    <location>
        <begin position="153"/>
        <end position="154"/>
    </location>
    <ligand>
        <name>thiamine diphosphate</name>
        <dbReference type="ChEBI" id="CHEBI:58937"/>
    </ligand>
</feature>
<feature type="binding site" evidence="1">
    <location>
        <position position="181"/>
    </location>
    <ligand>
        <name>Mg(2+)</name>
        <dbReference type="ChEBI" id="CHEBI:18420"/>
    </ligand>
</feature>
<feature type="binding site" evidence="1">
    <location>
        <position position="181"/>
    </location>
    <ligand>
        <name>thiamine diphosphate</name>
        <dbReference type="ChEBI" id="CHEBI:58937"/>
    </ligand>
</feature>
<feature type="binding site" evidence="1">
    <location>
        <position position="288"/>
    </location>
    <ligand>
        <name>thiamine diphosphate</name>
        <dbReference type="ChEBI" id="CHEBI:58937"/>
    </ligand>
</feature>
<feature type="binding site" evidence="1">
    <location>
        <position position="370"/>
    </location>
    <ligand>
        <name>thiamine diphosphate</name>
        <dbReference type="ChEBI" id="CHEBI:58937"/>
    </ligand>
</feature>
<comment type="function">
    <text evidence="1">Catalyzes the acyloin condensation reaction between C atoms 2 and 3 of pyruvate and glyceraldehyde 3-phosphate to yield 1-deoxy-D-xylulose-5-phosphate (DXP).</text>
</comment>
<comment type="catalytic activity">
    <reaction evidence="1">
        <text>D-glyceraldehyde 3-phosphate + pyruvate + H(+) = 1-deoxy-D-xylulose 5-phosphate + CO2</text>
        <dbReference type="Rhea" id="RHEA:12605"/>
        <dbReference type="ChEBI" id="CHEBI:15361"/>
        <dbReference type="ChEBI" id="CHEBI:15378"/>
        <dbReference type="ChEBI" id="CHEBI:16526"/>
        <dbReference type="ChEBI" id="CHEBI:57792"/>
        <dbReference type="ChEBI" id="CHEBI:59776"/>
        <dbReference type="EC" id="2.2.1.7"/>
    </reaction>
</comment>
<comment type="cofactor">
    <cofactor evidence="1">
        <name>Mg(2+)</name>
        <dbReference type="ChEBI" id="CHEBI:18420"/>
    </cofactor>
    <text evidence="1">Binds 1 Mg(2+) ion per subunit.</text>
</comment>
<comment type="cofactor">
    <cofactor evidence="1">
        <name>thiamine diphosphate</name>
        <dbReference type="ChEBI" id="CHEBI:58937"/>
    </cofactor>
    <text evidence="1">Binds 1 thiamine pyrophosphate per subunit.</text>
</comment>
<comment type="pathway">
    <text evidence="1">Metabolic intermediate biosynthesis; 1-deoxy-D-xylulose 5-phosphate biosynthesis; 1-deoxy-D-xylulose 5-phosphate from D-glyceraldehyde 3-phosphate and pyruvate: step 1/1.</text>
</comment>
<comment type="subunit">
    <text evidence="1">Homodimer.</text>
</comment>
<comment type="similarity">
    <text evidence="1">Belongs to the transketolase family. DXPS subfamily.</text>
</comment>
<organism>
    <name type="scientific">Shewanella sediminis (strain HAW-EB3)</name>
    <dbReference type="NCBI Taxonomy" id="425104"/>
    <lineage>
        <taxon>Bacteria</taxon>
        <taxon>Pseudomonadati</taxon>
        <taxon>Pseudomonadota</taxon>
        <taxon>Gammaproteobacteria</taxon>
        <taxon>Alteromonadales</taxon>
        <taxon>Shewanellaceae</taxon>
        <taxon>Shewanella</taxon>
    </lineage>
</organism>
<proteinExistence type="inferred from homology"/>
<protein>
    <recommendedName>
        <fullName evidence="1">1-deoxy-D-xylulose-5-phosphate synthase</fullName>
        <ecNumber evidence="1">2.2.1.7</ecNumber>
    </recommendedName>
    <alternativeName>
        <fullName evidence="1">1-deoxyxylulose-5-phosphate synthase</fullName>
        <shortName evidence="1">DXP synthase</shortName>
        <shortName evidence="1">DXPS</shortName>
    </alternativeName>
</protein>
<gene>
    <name evidence="1" type="primary">dxs</name>
    <name type="ordered locus">Ssed_3329</name>
</gene>
<name>DXS_SHESH</name>